<sequence>MISIKRLSSADTEFDKALSELLAFENTQDAKLEAAVADILAKIRTEGDKALLEYTLRFDRVDAKSAADLELPRNRLQQALHNLPGEQRNALEQAAERVRVYHEKQLTQSWSYVEPDGTHLGQKITPLDRAGLYVPGGKAAYPSSVLMNAIPAKVAGVGELVMVTPTPQGEVNDLVLAAAAICEVDRVFTIGGAQAVGALAYGTPTVPRVDKIVGPGNAYVATAKRHVFGVVGIDMLAGPSEILIICDGKTNPDWIAMDMFSQAEHDELAQAILLSPDLHFIETVAASIVRQLETMPRKEIIRTSLENRSALIQVHDLEEACEIANSIAPEHLELSVEQPEKWVEKIRHAGAIFLGRHTSEALGDYCAGPNHVLPTSRTARFSSPLGVYDFQKRSSIIQVSGQGSAKLGAIASILAQGEGLQAHAMSAEYRYTKKIALGKN</sequence>
<protein>
    <recommendedName>
        <fullName evidence="1">Histidinol dehydrogenase</fullName>
        <shortName evidence="1">HDH</shortName>
        <ecNumber evidence="1">1.1.1.23</ecNumber>
    </recommendedName>
</protein>
<organism>
    <name type="scientific">Nitrosospira multiformis (strain ATCC 25196 / NCIMB 11849 / C 71)</name>
    <dbReference type="NCBI Taxonomy" id="323848"/>
    <lineage>
        <taxon>Bacteria</taxon>
        <taxon>Pseudomonadati</taxon>
        <taxon>Pseudomonadota</taxon>
        <taxon>Betaproteobacteria</taxon>
        <taxon>Nitrosomonadales</taxon>
        <taxon>Nitrosomonadaceae</taxon>
        <taxon>Nitrosospira</taxon>
    </lineage>
</organism>
<proteinExistence type="inferred from homology"/>
<keyword id="KW-0028">Amino-acid biosynthesis</keyword>
<keyword id="KW-0368">Histidine biosynthesis</keyword>
<keyword id="KW-0479">Metal-binding</keyword>
<keyword id="KW-0520">NAD</keyword>
<keyword id="KW-0560">Oxidoreductase</keyword>
<keyword id="KW-1185">Reference proteome</keyword>
<keyword id="KW-0862">Zinc</keyword>
<accession>Q2YAU5</accession>
<evidence type="ECO:0000255" key="1">
    <source>
        <dbReference type="HAMAP-Rule" id="MF_01024"/>
    </source>
</evidence>
<comment type="function">
    <text evidence="1">Catalyzes the sequential NAD-dependent oxidations of L-histidinol to L-histidinaldehyde and then to L-histidine.</text>
</comment>
<comment type="catalytic activity">
    <reaction evidence="1">
        <text>L-histidinol + 2 NAD(+) + H2O = L-histidine + 2 NADH + 3 H(+)</text>
        <dbReference type="Rhea" id="RHEA:20641"/>
        <dbReference type="ChEBI" id="CHEBI:15377"/>
        <dbReference type="ChEBI" id="CHEBI:15378"/>
        <dbReference type="ChEBI" id="CHEBI:57540"/>
        <dbReference type="ChEBI" id="CHEBI:57595"/>
        <dbReference type="ChEBI" id="CHEBI:57699"/>
        <dbReference type="ChEBI" id="CHEBI:57945"/>
        <dbReference type="EC" id="1.1.1.23"/>
    </reaction>
</comment>
<comment type="cofactor">
    <cofactor evidence="1">
        <name>Zn(2+)</name>
        <dbReference type="ChEBI" id="CHEBI:29105"/>
    </cofactor>
    <text evidence="1">Binds 1 zinc ion per subunit.</text>
</comment>
<comment type="pathway">
    <text evidence="1">Amino-acid biosynthesis; L-histidine biosynthesis; L-histidine from 5-phospho-alpha-D-ribose 1-diphosphate: step 9/9.</text>
</comment>
<comment type="similarity">
    <text evidence="1">Belongs to the histidinol dehydrogenase family.</text>
</comment>
<gene>
    <name evidence="1" type="primary">hisD</name>
    <name type="ordered locus">Nmul_A0819</name>
</gene>
<dbReference type="EC" id="1.1.1.23" evidence="1"/>
<dbReference type="EMBL" id="CP000103">
    <property type="protein sequence ID" value="ABB74126.1"/>
    <property type="molecule type" value="Genomic_DNA"/>
</dbReference>
<dbReference type="RefSeq" id="WP_011380174.1">
    <property type="nucleotide sequence ID" value="NC_007614.1"/>
</dbReference>
<dbReference type="SMR" id="Q2YAU5"/>
<dbReference type="STRING" id="323848.Nmul_A0819"/>
<dbReference type="KEGG" id="nmu:Nmul_A0819"/>
<dbReference type="eggNOG" id="COG0141">
    <property type="taxonomic scope" value="Bacteria"/>
</dbReference>
<dbReference type="HOGENOM" id="CLU_006732_3_3_4"/>
<dbReference type="OrthoDB" id="9805269at2"/>
<dbReference type="UniPathway" id="UPA00031">
    <property type="reaction ID" value="UER00014"/>
</dbReference>
<dbReference type="Proteomes" id="UP000002718">
    <property type="component" value="Chromosome"/>
</dbReference>
<dbReference type="GO" id="GO:0005829">
    <property type="term" value="C:cytosol"/>
    <property type="evidence" value="ECO:0007669"/>
    <property type="project" value="TreeGrafter"/>
</dbReference>
<dbReference type="GO" id="GO:0004399">
    <property type="term" value="F:histidinol dehydrogenase activity"/>
    <property type="evidence" value="ECO:0007669"/>
    <property type="project" value="UniProtKB-UniRule"/>
</dbReference>
<dbReference type="GO" id="GO:0051287">
    <property type="term" value="F:NAD binding"/>
    <property type="evidence" value="ECO:0007669"/>
    <property type="project" value="InterPro"/>
</dbReference>
<dbReference type="GO" id="GO:0008270">
    <property type="term" value="F:zinc ion binding"/>
    <property type="evidence" value="ECO:0007669"/>
    <property type="project" value="UniProtKB-UniRule"/>
</dbReference>
<dbReference type="GO" id="GO:0000105">
    <property type="term" value="P:L-histidine biosynthetic process"/>
    <property type="evidence" value="ECO:0007669"/>
    <property type="project" value="UniProtKB-UniRule"/>
</dbReference>
<dbReference type="CDD" id="cd06572">
    <property type="entry name" value="Histidinol_dh"/>
    <property type="match status" value="1"/>
</dbReference>
<dbReference type="FunFam" id="3.40.50.1980:FF:000010">
    <property type="entry name" value="Histidinol dehydrogenase"/>
    <property type="match status" value="1"/>
</dbReference>
<dbReference type="FunFam" id="3.40.50.1980:FF:000026">
    <property type="entry name" value="Histidinol dehydrogenase"/>
    <property type="match status" value="1"/>
</dbReference>
<dbReference type="Gene3D" id="1.20.5.1300">
    <property type="match status" value="1"/>
</dbReference>
<dbReference type="Gene3D" id="3.40.50.1980">
    <property type="entry name" value="Nitrogenase molybdenum iron protein domain"/>
    <property type="match status" value="2"/>
</dbReference>
<dbReference type="HAMAP" id="MF_01024">
    <property type="entry name" value="HisD"/>
    <property type="match status" value="1"/>
</dbReference>
<dbReference type="InterPro" id="IPR016161">
    <property type="entry name" value="Ald_DH/histidinol_DH"/>
</dbReference>
<dbReference type="InterPro" id="IPR001692">
    <property type="entry name" value="Histidinol_DH_CS"/>
</dbReference>
<dbReference type="InterPro" id="IPR022695">
    <property type="entry name" value="Histidinol_DH_monofunct"/>
</dbReference>
<dbReference type="InterPro" id="IPR012131">
    <property type="entry name" value="Hstdl_DH"/>
</dbReference>
<dbReference type="NCBIfam" id="TIGR00069">
    <property type="entry name" value="hisD"/>
    <property type="match status" value="1"/>
</dbReference>
<dbReference type="PANTHER" id="PTHR21256:SF2">
    <property type="entry name" value="HISTIDINE BIOSYNTHESIS TRIFUNCTIONAL PROTEIN"/>
    <property type="match status" value="1"/>
</dbReference>
<dbReference type="PANTHER" id="PTHR21256">
    <property type="entry name" value="HISTIDINOL DEHYDROGENASE HDH"/>
    <property type="match status" value="1"/>
</dbReference>
<dbReference type="Pfam" id="PF00815">
    <property type="entry name" value="Histidinol_dh"/>
    <property type="match status" value="1"/>
</dbReference>
<dbReference type="PIRSF" id="PIRSF000099">
    <property type="entry name" value="Histidinol_dh"/>
    <property type="match status" value="1"/>
</dbReference>
<dbReference type="PRINTS" id="PR00083">
    <property type="entry name" value="HOLDHDRGNASE"/>
</dbReference>
<dbReference type="SUPFAM" id="SSF53720">
    <property type="entry name" value="ALDH-like"/>
    <property type="match status" value="1"/>
</dbReference>
<dbReference type="PROSITE" id="PS00611">
    <property type="entry name" value="HISOL_DEHYDROGENASE"/>
    <property type="match status" value="1"/>
</dbReference>
<reference key="1">
    <citation type="submission" date="2005-08" db="EMBL/GenBank/DDBJ databases">
        <title>Complete sequence of chromosome 1 of Nitrosospira multiformis ATCC 25196.</title>
        <authorList>
            <person name="Copeland A."/>
            <person name="Lucas S."/>
            <person name="Lapidus A."/>
            <person name="Barry K."/>
            <person name="Detter J.C."/>
            <person name="Glavina T."/>
            <person name="Hammon N."/>
            <person name="Israni S."/>
            <person name="Pitluck S."/>
            <person name="Chain P."/>
            <person name="Malfatti S."/>
            <person name="Shin M."/>
            <person name="Vergez L."/>
            <person name="Schmutz J."/>
            <person name="Larimer F."/>
            <person name="Land M."/>
            <person name="Hauser L."/>
            <person name="Kyrpides N."/>
            <person name="Lykidis A."/>
            <person name="Richardson P."/>
        </authorList>
    </citation>
    <scope>NUCLEOTIDE SEQUENCE [LARGE SCALE GENOMIC DNA]</scope>
    <source>
        <strain>ATCC 25196 / NCIMB 11849 / C 71</strain>
    </source>
</reference>
<feature type="chain" id="PRO_0000229859" description="Histidinol dehydrogenase">
    <location>
        <begin position="1"/>
        <end position="440"/>
    </location>
</feature>
<feature type="active site" description="Proton acceptor" evidence="1">
    <location>
        <position position="330"/>
    </location>
</feature>
<feature type="active site" description="Proton acceptor" evidence="1">
    <location>
        <position position="331"/>
    </location>
</feature>
<feature type="binding site" evidence="1">
    <location>
        <position position="133"/>
    </location>
    <ligand>
        <name>NAD(+)</name>
        <dbReference type="ChEBI" id="CHEBI:57540"/>
    </ligand>
</feature>
<feature type="binding site" evidence="1">
    <location>
        <position position="194"/>
    </location>
    <ligand>
        <name>NAD(+)</name>
        <dbReference type="ChEBI" id="CHEBI:57540"/>
    </ligand>
</feature>
<feature type="binding site" evidence="1">
    <location>
        <position position="217"/>
    </location>
    <ligand>
        <name>NAD(+)</name>
        <dbReference type="ChEBI" id="CHEBI:57540"/>
    </ligand>
</feature>
<feature type="binding site" evidence="1">
    <location>
        <position position="240"/>
    </location>
    <ligand>
        <name>substrate</name>
    </ligand>
</feature>
<feature type="binding site" evidence="1">
    <location>
        <position position="262"/>
    </location>
    <ligand>
        <name>substrate</name>
    </ligand>
</feature>
<feature type="binding site" evidence="1">
    <location>
        <position position="262"/>
    </location>
    <ligand>
        <name>Zn(2+)</name>
        <dbReference type="ChEBI" id="CHEBI:29105"/>
    </ligand>
</feature>
<feature type="binding site" evidence="1">
    <location>
        <position position="265"/>
    </location>
    <ligand>
        <name>substrate</name>
    </ligand>
</feature>
<feature type="binding site" evidence="1">
    <location>
        <position position="265"/>
    </location>
    <ligand>
        <name>Zn(2+)</name>
        <dbReference type="ChEBI" id="CHEBI:29105"/>
    </ligand>
</feature>
<feature type="binding site" evidence="1">
    <location>
        <position position="331"/>
    </location>
    <ligand>
        <name>substrate</name>
    </ligand>
</feature>
<feature type="binding site" evidence="1">
    <location>
        <position position="364"/>
    </location>
    <ligand>
        <name>substrate</name>
    </ligand>
</feature>
<feature type="binding site" evidence="1">
    <location>
        <position position="364"/>
    </location>
    <ligand>
        <name>Zn(2+)</name>
        <dbReference type="ChEBI" id="CHEBI:29105"/>
    </ligand>
</feature>
<feature type="binding site" evidence="1">
    <location>
        <position position="418"/>
    </location>
    <ligand>
        <name>substrate</name>
    </ligand>
</feature>
<feature type="binding site" evidence="1">
    <location>
        <position position="423"/>
    </location>
    <ligand>
        <name>substrate</name>
    </ligand>
</feature>
<feature type="binding site" evidence="1">
    <location>
        <position position="423"/>
    </location>
    <ligand>
        <name>Zn(2+)</name>
        <dbReference type="ChEBI" id="CHEBI:29105"/>
    </ligand>
</feature>
<name>HISX_NITMU</name>